<reference key="1">
    <citation type="submission" date="2006-08" db="EMBL/GenBank/DDBJ databases">
        <title>Complete sequence of Shewanella frigidimarina NCIMB 400.</title>
        <authorList>
            <consortium name="US DOE Joint Genome Institute"/>
            <person name="Copeland A."/>
            <person name="Lucas S."/>
            <person name="Lapidus A."/>
            <person name="Barry K."/>
            <person name="Detter J.C."/>
            <person name="Glavina del Rio T."/>
            <person name="Hammon N."/>
            <person name="Israni S."/>
            <person name="Dalin E."/>
            <person name="Tice H."/>
            <person name="Pitluck S."/>
            <person name="Fredrickson J.K."/>
            <person name="Kolker E."/>
            <person name="McCuel L.A."/>
            <person name="DiChristina T."/>
            <person name="Nealson K.H."/>
            <person name="Newman D."/>
            <person name="Tiedje J.M."/>
            <person name="Zhou J."/>
            <person name="Romine M.F."/>
            <person name="Culley D.E."/>
            <person name="Serres M."/>
            <person name="Chertkov O."/>
            <person name="Brettin T."/>
            <person name="Bruce D."/>
            <person name="Han C."/>
            <person name="Tapia R."/>
            <person name="Gilna P."/>
            <person name="Schmutz J."/>
            <person name="Larimer F."/>
            <person name="Land M."/>
            <person name="Hauser L."/>
            <person name="Kyrpides N."/>
            <person name="Mikhailova N."/>
            <person name="Richardson P."/>
        </authorList>
    </citation>
    <scope>NUCLEOTIDE SEQUENCE [LARGE SCALE GENOMIC DNA]</scope>
    <source>
        <strain>NCIMB 400</strain>
    </source>
</reference>
<dbReference type="EMBL" id="CP000447">
    <property type="protein sequence ID" value="ABI73184.1"/>
    <property type="molecule type" value="Genomic_DNA"/>
</dbReference>
<dbReference type="RefSeq" id="WP_011638786.1">
    <property type="nucleotide sequence ID" value="NC_008345.1"/>
</dbReference>
<dbReference type="SMR" id="Q07XT0"/>
<dbReference type="STRING" id="318167.Sfri_3348"/>
<dbReference type="KEGG" id="sfr:Sfri_3348"/>
<dbReference type="eggNOG" id="COG0359">
    <property type="taxonomic scope" value="Bacteria"/>
</dbReference>
<dbReference type="HOGENOM" id="CLU_078938_4_1_6"/>
<dbReference type="OrthoDB" id="9788336at2"/>
<dbReference type="Proteomes" id="UP000000684">
    <property type="component" value="Chromosome"/>
</dbReference>
<dbReference type="GO" id="GO:1990904">
    <property type="term" value="C:ribonucleoprotein complex"/>
    <property type="evidence" value="ECO:0007669"/>
    <property type="project" value="UniProtKB-KW"/>
</dbReference>
<dbReference type="GO" id="GO:0005840">
    <property type="term" value="C:ribosome"/>
    <property type="evidence" value="ECO:0007669"/>
    <property type="project" value="UniProtKB-KW"/>
</dbReference>
<dbReference type="GO" id="GO:0019843">
    <property type="term" value="F:rRNA binding"/>
    <property type="evidence" value="ECO:0007669"/>
    <property type="project" value="UniProtKB-UniRule"/>
</dbReference>
<dbReference type="GO" id="GO:0003735">
    <property type="term" value="F:structural constituent of ribosome"/>
    <property type="evidence" value="ECO:0007669"/>
    <property type="project" value="InterPro"/>
</dbReference>
<dbReference type="GO" id="GO:0006412">
    <property type="term" value="P:translation"/>
    <property type="evidence" value="ECO:0007669"/>
    <property type="project" value="UniProtKB-UniRule"/>
</dbReference>
<dbReference type="FunFam" id="3.10.430.100:FF:000001">
    <property type="entry name" value="50S ribosomal protein L9"/>
    <property type="match status" value="1"/>
</dbReference>
<dbReference type="FunFam" id="3.40.5.10:FF:000001">
    <property type="entry name" value="50S ribosomal protein L9"/>
    <property type="match status" value="1"/>
</dbReference>
<dbReference type="Gene3D" id="3.10.430.100">
    <property type="entry name" value="Ribosomal protein L9, C-terminal domain"/>
    <property type="match status" value="1"/>
</dbReference>
<dbReference type="Gene3D" id="3.40.5.10">
    <property type="entry name" value="Ribosomal protein L9, N-terminal domain"/>
    <property type="match status" value="1"/>
</dbReference>
<dbReference type="HAMAP" id="MF_00503">
    <property type="entry name" value="Ribosomal_bL9"/>
    <property type="match status" value="1"/>
</dbReference>
<dbReference type="InterPro" id="IPR000244">
    <property type="entry name" value="Ribosomal_bL9"/>
</dbReference>
<dbReference type="InterPro" id="IPR009027">
    <property type="entry name" value="Ribosomal_bL9/RNase_H1_N"/>
</dbReference>
<dbReference type="InterPro" id="IPR020594">
    <property type="entry name" value="Ribosomal_bL9_bac/chp"/>
</dbReference>
<dbReference type="InterPro" id="IPR020069">
    <property type="entry name" value="Ribosomal_bL9_C"/>
</dbReference>
<dbReference type="InterPro" id="IPR036791">
    <property type="entry name" value="Ribosomal_bL9_C_sf"/>
</dbReference>
<dbReference type="InterPro" id="IPR020070">
    <property type="entry name" value="Ribosomal_bL9_N"/>
</dbReference>
<dbReference type="InterPro" id="IPR036935">
    <property type="entry name" value="Ribosomal_bL9_N_sf"/>
</dbReference>
<dbReference type="NCBIfam" id="TIGR00158">
    <property type="entry name" value="L9"/>
    <property type="match status" value="1"/>
</dbReference>
<dbReference type="PANTHER" id="PTHR21368">
    <property type="entry name" value="50S RIBOSOMAL PROTEIN L9"/>
    <property type="match status" value="1"/>
</dbReference>
<dbReference type="Pfam" id="PF03948">
    <property type="entry name" value="Ribosomal_L9_C"/>
    <property type="match status" value="1"/>
</dbReference>
<dbReference type="Pfam" id="PF01281">
    <property type="entry name" value="Ribosomal_L9_N"/>
    <property type="match status" value="1"/>
</dbReference>
<dbReference type="SUPFAM" id="SSF55658">
    <property type="entry name" value="L9 N-domain-like"/>
    <property type="match status" value="1"/>
</dbReference>
<dbReference type="SUPFAM" id="SSF55653">
    <property type="entry name" value="Ribosomal protein L9 C-domain"/>
    <property type="match status" value="1"/>
</dbReference>
<dbReference type="PROSITE" id="PS00651">
    <property type="entry name" value="RIBOSOMAL_L9"/>
    <property type="match status" value="1"/>
</dbReference>
<keyword id="KW-1185">Reference proteome</keyword>
<keyword id="KW-0687">Ribonucleoprotein</keyword>
<keyword id="KW-0689">Ribosomal protein</keyword>
<keyword id="KW-0694">RNA-binding</keyword>
<keyword id="KW-0699">rRNA-binding</keyword>
<feature type="chain" id="PRO_1000014858" description="Large ribosomal subunit protein bL9">
    <location>
        <begin position="1"/>
        <end position="150"/>
    </location>
</feature>
<protein>
    <recommendedName>
        <fullName evidence="1">Large ribosomal subunit protein bL9</fullName>
    </recommendedName>
    <alternativeName>
        <fullName evidence="2">50S ribosomal protein L9</fullName>
    </alternativeName>
</protein>
<organism>
    <name type="scientific">Shewanella frigidimarina (strain NCIMB 400)</name>
    <dbReference type="NCBI Taxonomy" id="318167"/>
    <lineage>
        <taxon>Bacteria</taxon>
        <taxon>Pseudomonadati</taxon>
        <taxon>Pseudomonadota</taxon>
        <taxon>Gammaproteobacteria</taxon>
        <taxon>Alteromonadales</taxon>
        <taxon>Shewanellaceae</taxon>
        <taxon>Shewanella</taxon>
    </lineage>
</organism>
<comment type="function">
    <text evidence="1">Binds to the 23S rRNA.</text>
</comment>
<comment type="similarity">
    <text evidence="1">Belongs to the bacterial ribosomal protein bL9 family.</text>
</comment>
<evidence type="ECO:0000255" key="1">
    <source>
        <dbReference type="HAMAP-Rule" id="MF_00503"/>
    </source>
</evidence>
<evidence type="ECO:0000305" key="2"/>
<sequence>MNVILLDKVANLGSLGDQVSVKAGYARNFLLPYGKAVVANAANTEVFEARRAELEAKLAAELATATARADKLTALEAVVIASKAGDEGKLFGSIGNRDIADAVTAAGVALAKSEVRLPLGALRTTGSFEIEVQVHAEVKAVVKIAIVAEA</sequence>
<accession>Q07XT0</accession>
<name>RL9_SHEFN</name>
<gene>
    <name evidence="1" type="primary">rplI</name>
    <name type="ordered locus">Sfri_3348</name>
</gene>
<proteinExistence type="inferred from homology"/>